<name>ISCA_ECOL5</name>
<protein>
    <recommendedName>
        <fullName evidence="1">Iron-binding protein IscA</fullName>
    </recommendedName>
    <alternativeName>
        <fullName evidence="1">Iron-sulfur cluster assembly protein</fullName>
    </alternativeName>
</protein>
<evidence type="ECO:0000255" key="1">
    <source>
        <dbReference type="HAMAP-Rule" id="MF_01429"/>
    </source>
</evidence>
<dbReference type="EMBL" id="CP000247">
    <property type="protein sequence ID" value="ABG70522.1"/>
    <property type="molecule type" value="Genomic_DNA"/>
</dbReference>
<dbReference type="RefSeq" id="WP_000028953.1">
    <property type="nucleotide sequence ID" value="NC_008253.1"/>
</dbReference>
<dbReference type="SMR" id="Q0TEV7"/>
<dbReference type="GeneID" id="93774608"/>
<dbReference type="KEGG" id="ecp:ECP_2533"/>
<dbReference type="HOGENOM" id="CLU_069054_5_1_6"/>
<dbReference type="Proteomes" id="UP000009182">
    <property type="component" value="Chromosome"/>
</dbReference>
<dbReference type="GO" id="GO:0005829">
    <property type="term" value="C:cytosol"/>
    <property type="evidence" value="ECO:0007669"/>
    <property type="project" value="TreeGrafter"/>
</dbReference>
<dbReference type="GO" id="GO:0051537">
    <property type="term" value="F:2 iron, 2 sulfur cluster binding"/>
    <property type="evidence" value="ECO:0007669"/>
    <property type="project" value="TreeGrafter"/>
</dbReference>
<dbReference type="GO" id="GO:0005506">
    <property type="term" value="F:iron ion binding"/>
    <property type="evidence" value="ECO:0007669"/>
    <property type="project" value="UniProtKB-UniRule"/>
</dbReference>
<dbReference type="GO" id="GO:0016226">
    <property type="term" value="P:iron-sulfur cluster assembly"/>
    <property type="evidence" value="ECO:0007669"/>
    <property type="project" value="UniProtKB-UniRule"/>
</dbReference>
<dbReference type="FunFam" id="2.60.300.12:FF:000001">
    <property type="entry name" value="Iron-binding protein IscA"/>
    <property type="match status" value="1"/>
</dbReference>
<dbReference type="Gene3D" id="2.60.300.12">
    <property type="entry name" value="HesB-like domain"/>
    <property type="match status" value="1"/>
</dbReference>
<dbReference type="HAMAP" id="MF_01429">
    <property type="entry name" value="Fe_S_insert_IscA"/>
    <property type="match status" value="1"/>
</dbReference>
<dbReference type="InterPro" id="IPR050322">
    <property type="entry name" value="Fe-S_cluster_asmbl/transfer"/>
</dbReference>
<dbReference type="InterPro" id="IPR000361">
    <property type="entry name" value="FeS_biogenesis"/>
</dbReference>
<dbReference type="InterPro" id="IPR016092">
    <property type="entry name" value="FeS_cluster_insertion"/>
</dbReference>
<dbReference type="InterPro" id="IPR017870">
    <property type="entry name" value="FeS_cluster_insertion_CS"/>
</dbReference>
<dbReference type="InterPro" id="IPR035903">
    <property type="entry name" value="HesB-like_dom_sf"/>
</dbReference>
<dbReference type="InterPro" id="IPR011302">
    <property type="entry name" value="IscA_proteobacteria"/>
</dbReference>
<dbReference type="NCBIfam" id="TIGR00049">
    <property type="entry name" value="iron-sulfur cluster assembly accessory protein"/>
    <property type="match status" value="1"/>
</dbReference>
<dbReference type="NCBIfam" id="TIGR02011">
    <property type="entry name" value="IscA"/>
    <property type="match status" value="1"/>
</dbReference>
<dbReference type="NCBIfam" id="NF007049">
    <property type="entry name" value="PRK09502.1"/>
    <property type="match status" value="1"/>
</dbReference>
<dbReference type="PANTHER" id="PTHR10072:SF41">
    <property type="entry name" value="IRON-SULFUR CLUSTER ASSEMBLY 1 HOMOLOG, MITOCHONDRIAL"/>
    <property type="match status" value="1"/>
</dbReference>
<dbReference type="PANTHER" id="PTHR10072">
    <property type="entry name" value="IRON-SULFUR CLUSTER ASSEMBLY PROTEIN"/>
    <property type="match status" value="1"/>
</dbReference>
<dbReference type="Pfam" id="PF01521">
    <property type="entry name" value="Fe-S_biosyn"/>
    <property type="match status" value="1"/>
</dbReference>
<dbReference type="SUPFAM" id="SSF89360">
    <property type="entry name" value="HesB-like domain"/>
    <property type="match status" value="1"/>
</dbReference>
<dbReference type="PROSITE" id="PS01152">
    <property type="entry name" value="HESB"/>
    <property type="match status" value="1"/>
</dbReference>
<sequence>MSITLSDSAAARVNTFLANRGKGFGLRLGVRTSGCSGMAYVLEFVDEPTPEDIVFEDKGVKVVVDGKSLQFLDGTQLDFVKEGLNEGFKFTNPNVKDECGCGESFHV</sequence>
<accession>Q0TEV7</accession>
<feature type="chain" id="PRO_1000024373" description="Iron-binding protein IscA">
    <location>
        <begin position="1"/>
        <end position="107"/>
    </location>
</feature>
<feature type="binding site" evidence="1">
    <location>
        <position position="35"/>
    </location>
    <ligand>
        <name>Fe cation</name>
        <dbReference type="ChEBI" id="CHEBI:24875"/>
    </ligand>
</feature>
<feature type="binding site" evidence="1">
    <location>
        <position position="99"/>
    </location>
    <ligand>
        <name>Fe cation</name>
        <dbReference type="ChEBI" id="CHEBI:24875"/>
    </ligand>
</feature>
<feature type="binding site" evidence="1">
    <location>
        <position position="101"/>
    </location>
    <ligand>
        <name>Fe cation</name>
        <dbReference type="ChEBI" id="CHEBI:24875"/>
    </ligand>
</feature>
<gene>
    <name evidence="1" type="primary">iscA</name>
    <name type="ordered locus">ECP_2533</name>
</gene>
<organism>
    <name type="scientific">Escherichia coli O6:K15:H31 (strain 536 / UPEC)</name>
    <dbReference type="NCBI Taxonomy" id="362663"/>
    <lineage>
        <taxon>Bacteria</taxon>
        <taxon>Pseudomonadati</taxon>
        <taxon>Pseudomonadota</taxon>
        <taxon>Gammaproteobacteria</taxon>
        <taxon>Enterobacterales</taxon>
        <taxon>Enterobacteriaceae</taxon>
        <taxon>Escherichia</taxon>
    </lineage>
</organism>
<proteinExistence type="inferred from homology"/>
<reference key="1">
    <citation type="journal article" date="2006" name="Mol. Microbiol.">
        <title>Role of pathogenicity island-associated integrases in the genome plasticity of uropathogenic Escherichia coli strain 536.</title>
        <authorList>
            <person name="Hochhut B."/>
            <person name="Wilde C."/>
            <person name="Balling G."/>
            <person name="Middendorf B."/>
            <person name="Dobrindt U."/>
            <person name="Brzuszkiewicz E."/>
            <person name="Gottschalk G."/>
            <person name="Carniel E."/>
            <person name="Hacker J."/>
        </authorList>
    </citation>
    <scope>NUCLEOTIDE SEQUENCE [LARGE SCALE GENOMIC DNA]</scope>
    <source>
        <strain>536 / UPEC</strain>
    </source>
</reference>
<comment type="function">
    <text evidence="1">Is able to transfer iron-sulfur clusters to apo-ferredoxin. Multiple cycles of [2Fe2S] cluster formation and transfer are observed, suggesting that IscA acts catalytically. Recruits intracellular free iron so as to provide iron for the assembly of transient iron-sulfur cluster in IscU in the presence of IscS, L-cysteine and the thioredoxin reductase system TrxA/TrxB.</text>
</comment>
<comment type="cofactor">
    <cofactor evidence="1">
        <name>Fe cation</name>
        <dbReference type="ChEBI" id="CHEBI:24875"/>
    </cofactor>
    <text evidence="1">Binds 2 iron ions per dimer. The dimer may bind additional iron ions.</text>
</comment>
<comment type="subunit">
    <text evidence="1">Homodimer; may form tetramers and higher multimers.</text>
</comment>
<comment type="similarity">
    <text evidence="1">Belongs to the HesB/IscA family.</text>
</comment>
<keyword id="KW-0408">Iron</keyword>
<keyword id="KW-0479">Metal-binding</keyword>